<organism>
    <name type="scientific">Grapevine leafroll-associated virus 3 (isolate United States/NY1)</name>
    <name type="common">GLRaV-3</name>
    <name type="synonym">Grapevine leafroll-associated closterovirus (isolate 109)</name>
    <dbReference type="NCBI Taxonomy" id="651354"/>
    <lineage>
        <taxon>Viruses</taxon>
        <taxon>Riboviria</taxon>
        <taxon>Orthornavirae</taxon>
        <taxon>Kitrinoviricota</taxon>
        <taxon>Alsuviricetes</taxon>
        <taxon>Martellivirales</taxon>
        <taxon>Closteroviridae</taxon>
        <taxon>Ampelovirus</taxon>
        <taxon>Grapevine leafroll-associated virus 3</taxon>
    </lineage>
</organism>
<sequence>MYSRGSFFKSRVTLPTLVGAYMWEFELPYLTDKRHISYSAPSVATFSLVSR</sequence>
<dbReference type="EMBL" id="AF037268">
    <property type="protein sequence ID" value="AAC40706.1"/>
    <property type="molecule type" value="Genomic_RNA"/>
</dbReference>
<dbReference type="RefSeq" id="NP_813797.1">
    <property type="nucleotide sequence ID" value="NC_004667.1"/>
</dbReference>
<dbReference type="KEGG" id="vg:1444466"/>
<dbReference type="Proteomes" id="UP000006707">
    <property type="component" value="Segment"/>
</dbReference>
<name>P6_GLRV3</name>
<proteinExistence type="predicted"/>
<reference key="1">
    <citation type="journal article" date="1998" name="J. Gen. Virol.">
        <title>Nucleotide sequence of the 3'-terminal two-thirds of the grapevine leafroll-associated virus-3 genome reveals a typical monopartite closterovirus.</title>
        <authorList>
            <person name="Ling K.S."/>
            <person name="Zhu H.Y."/>
            <person name="Drong R.F."/>
            <person name="Slightom J.L."/>
            <person name="McFerson J.R."/>
            <person name="Gonsalves D."/>
        </authorList>
    </citation>
    <scope>NUCLEOTIDE SEQUENCE [GENOMIC RNA]</scope>
</reference>
<organismHost>
    <name type="scientific">Vitis vinifera</name>
    <name type="common">Grape</name>
    <dbReference type="NCBI Taxonomy" id="29760"/>
</organismHost>
<accession>O71190</accession>
<gene>
    <name type="ORF">ORF2</name>
</gene>
<protein>
    <recommendedName>
        <fullName>Uncharacterized 6 kDa protein</fullName>
        <shortName>p6</shortName>
    </recommendedName>
</protein>
<feature type="chain" id="PRO_0000402520" description="Uncharacterized 6 kDa protein">
    <location>
        <begin position="1"/>
        <end position="51"/>
    </location>
</feature>
<keyword id="KW-1185">Reference proteome</keyword>